<sequence>MVTLYGGVEGGGTRSKVLLLSEDGQILAEADGLSTNHWLIGTDKCVERINEMVNRAKRKAGVDPLVPLRGLGLSLSGGDQEDAVRMLMEELRDRFPYLSESYLITTDAAGSIATATPDGGVVLISGTGSNCRLINPDGSESGCGGWGHMMGDEGSAYWIAHQAVKIVFDSIDNLEAAPHDIGYVKQAMFNYFQVPDRLGILTHLYRDFDKSRFAGFCRKVAEGAQQGDPLSRCIFRKAGEMLGRHVVAVLPEIDPVLFQGEMGLPILCVGSVWKSWELLKEGFLLALTQGREIQAQNSFSGFTLLKLRHSSALGAASLGAKHIGHLLPMDYSTSAIAFYSYTFS</sequence>
<feature type="chain" id="PRO_0000253473" description="N-acetyl-D-glucosamine kinase">
    <location>
        <begin position="1"/>
        <end position="344"/>
    </location>
</feature>
<feature type="binding site" evidence="2">
    <location>
        <position position="13"/>
    </location>
    <ligand>
        <name>ATP</name>
        <dbReference type="ChEBI" id="CHEBI:30616"/>
    </ligand>
</feature>
<feature type="binding site" evidence="2">
    <location>
        <position position="36"/>
    </location>
    <ligand>
        <name>N-acetyl-D-glucosamine</name>
        <dbReference type="ChEBI" id="CHEBI:506227"/>
    </ligand>
</feature>
<feature type="binding site" evidence="2">
    <location>
        <position position="107"/>
    </location>
    <ligand>
        <name>N-acetyl-D-glucosamine</name>
        <dbReference type="ChEBI" id="CHEBI:506227"/>
    </ligand>
</feature>
<feature type="binding site" evidence="2">
    <location>
        <position position="127"/>
    </location>
    <ligand>
        <name>ATP</name>
        <dbReference type="ChEBI" id="CHEBI:30616"/>
    </ligand>
</feature>
<feature type="binding site" evidence="2">
    <location>
        <begin position="129"/>
        <end position="130"/>
    </location>
    <ligand>
        <name>N-acetyl-D-glucosamine</name>
        <dbReference type="ChEBI" id="CHEBI:506227"/>
    </ligand>
</feature>
<feature type="binding site" evidence="2">
    <location>
        <begin position="145"/>
        <end position="147"/>
    </location>
    <ligand>
        <name>N-acetyl-D-glucosamine</name>
        <dbReference type="ChEBI" id="CHEBI:506227"/>
    </ligand>
</feature>
<feature type="binding site" evidence="2">
    <location>
        <position position="152"/>
    </location>
    <ligand>
        <name>N-acetyl-D-glucosamine</name>
        <dbReference type="ChEBI" id="CHEBI:506227"/>
    </ligand>
</feature>
<feature type="binding site" evidence="2">
    <location>
        <position position="214"/>
    </location>
    <ligand>
        <name>ATP</name>
        <dbReference type="ChEBI" id="CHEBI:30616"/>
    </ligand>
</feature>
<feature type="binding site" evidence="2">
    <location>
        <position position="271"/>
    </location>
    <ligand>
        <name>ATP</name>
        <dbReference type="ChEBI" id="CHEBI:30616"/>
    </ligand>
</feature>
<feature type="binding site" evidence="2">
    <location>
        <position position="275"/>
    </location>
    <ligand>
        <name>ATP</name>
        <dbReference type="ChEBI" id="CHEBI:30616"/>
    </ligand>
</feature>
<feature type="modified residue" description="Phosphoserine" evidence="2">
    <location>
        <position position="76"/>
    </location>
</feature>
<feature type="modified residue" description="Phosphotyrosine" evidence="2">
    <location>
        <position position="205"/>
    </location>
</feature>
<protein>
    <recommendedName>
        <fullName>N-acetyl-D-glucosamine kinase</fullName>
        <shortName>N-acetylglucosamine kinase</shortName>
        <ecNumber evidence="1">2.7.1.59</ecNumber>
    </recommendedName>
    <alternativeName>
        <fullName>GlcNAc kinase</fullName>
    </alternativeName>
    <alternativeName>
        <fullName evidence="3">Muramyl dipeptide kinase</fullName>
        <ecNumber evidence="2">2.7.1.-</ecNumber>
    </alternativeName>
    <alternativeName>
        <fullName evidence="3">N-acetyl-D-mannosamine kinase</fullName>
        <ecNumber evidence="1">2.7.1.60</ecNumber>
    </alternativeName>
</protein>
<proteinExistence type="evidence at transcript level"/>
<comment type="function">
    <text evidence="1 2">Converts endogenous N-acetylglucosamine (GlcNAc), a major component of complex carbohydrates, from lysosomal degradation or nutritional sources into GlcNAc 6-phosphate (By similarity). Also has N-acetylmannosamine (ManNAc) kinase activity (By similarity). Involved in the N-glycolylneuraminic acid (Neu5Gc) degradation pathway (By similarity). Also involved in innate immunity by promoting detection of bacterial peptidoglycan by NOD2: acts by catalyzing phosphorylation of muramyl dipeptide (MDP), a fragment of bacterial peptidoglycan, to generate 6-O-phospho-muramyl dipeptide, which acts as a direct ligand for NOD2 (By similarity).</text>
</comment>
<comment type="catalytic activity">
    <reaction evidence="1">
        <text>N-acetyl-D-glucosamine + ATP = N-acetyl-D-glucosamine 6-phosphate + ADP + H(+)</text>
        <dbReference type="Rhea" id="RHEA:17417"/>
        <dbReference type="ChEBI" id="CHEBI:15378"/>
        <dbReference type="ChEBI" id="CHEBI:30616"/>
        <dbReference type="ChEBI" id="CHEBI:57513"/>
        <dbReference type="ChEBI" id="CHEBI:456216"/>
        <dbReference type="ChEBI" id="CHEBI:506227"/>
        <dbReference type="EC" id="2.7.1.59"/>
    </reaction>
    <physiologicalReaction direction="left-to-right" evidence="1">
        <dbReference type="Rhea" id="RHEA:17418"/>
    </physiologicalReaction>
</comment>
<comment type="catalytic activity">
    <reaction evidence="1">
        <text>aldehydo-N-acetyl-D-mannosamine + ATP = aldehydo-N-acetyl-D-mannosamine 6-phosphate + ADP + H(+)</text>
        <dbReference type="Rhea" id="RHEA:25253"/>
        <dbReference type="ChEBI" id="CHEBI:15378"/>
        <dbReference type="ChEBI" id="CHEBI:17122"/>
        <dbReference type="ChEBI" id="CHEBI:30616"/>
        <dbReference type="ChEBI" id="CHEBI:58557"/>
        <dbReference type="ChEBI" id="CHEBI:456216"/>
        <dbReference type="EC" id="2.7.1.60"/>
    </reaction>
    <physiologicalReaction direction="left-to-right" evidence="1">
        <dbReference type="Rhea" id="RHEA:25254"/>
    </physiologicalReaction>
</comment>
<comment type="catalytic activity">
    <reaction evidence="2">
        <text>N-acetyl-D-muramoyl-L-alanyl-D-isoglutamine + ATP = 6-O-phospho-N-acetyl-D-muramoyl-L-alanyl-D-isoglutamine + ADP + H(+)</text>
        <dbReference type="Rhea" id="RHEA:75935"/>
        <dbReference type="ChEBI" id="CHEBI:15378"/>
        <dbReference type="ChEBI" id="CHEBI:30616"/>
        <dbReference type="ChEBI" id="CHEBI:155830"/>
        <dbReference type="ChEBI" id="CHEBI:194492"/>
        <dbReference type="ChEBI" id="CHEBI:456216"/>
    </reaction>
    <physiologicalReaction direction="left-to-right" evidence="2">
        <dbReference type="Rhea" id="RHEA:75936"/>
    </physiologicalReaction>
</comment>
<comment type="pathway">
    <text evidence="1">Amino-sugar metabolism; N-acetylneuraminate degradation.</text>
</comment>
<comment type="subunit">
    <text evidence="1">Homodimer.</text>
</comment>
<comment type="similarity">
    <text evidence="3">Belongs to the eukaryotic-type N-acetylglucosamine kinase family.</text>
</comment>
<accession>Q3SZM9</accession>
<evidence type="ECO:0000250" key="1">
    <source>
        <dbReference type="UniProtKB" id="Q9QZ08"/>
    </source>
</evidence>
<evidence type="ECO:0000250" key="2">
    <source>
        <dbReference type="UniProtKB" id="Q9UJ70"/>
    </source>
</evidence>
<evidence type="ECO:0000305" key="3"/>
<reference key="1">
    <citation type="submission" date="2005-08" db="EMBL/GenBank/DDBJ databases">
        <authorList>
            <consortium name="NIH - Mammalian Gene Collection (MGC) project"/>
        </authorList>
    </citation>
    <scope>NUCLEOTIDE SEQUENCE [LARGE SCALE MRNA]</scope>
    <source>
        <strain>Crossbred X Angus</strain>
        <tissue>Ileum</tissue>
    </source>
</reference>
<keyword id="KW-0067">ATP-binding</keyword>
<keyword id="KW-0391">Immunity</keyword>
<keyword id="KW-0399">Innate immunity</keyword>
<keyword id="KW-0418">Kinase</keyword>
<keyword id="KW-0547">Nucleotide-binding</keyword>
<keyword id="KW-0597">Phosphoprotein</keyword>
<keyword id="KW-1185">Reference proteome</keyword>
<keyword id="KW-0808">Transferase</keyword>
<name>NAGK_BOVIN</name>
<gene>
    <name type="primary">NAGK</name>
</gene>
<dbReference type="EC" id="2.7.1.59" evidence="1"/>
<dbReference type="EC" id="2.7.1.-" evidence="2"/>
<dbReference type="EC" id="2.7.1.60" evidence="1"/>
<dbReference type="EMBL" id="BC102780">
    <property type="protein sequence ID" value="AAI02781.1"/>
    <property type="molecule type" value="mRNA"/>
</dbReference>
<dbReference type="RefSeq" id="NP_001029486.1">
    <property type="nucleotide sequence ID" value="NM_001034314.2"/>
</dbReference>
<dbReference type="SMR" id="Q3SZM9"/>
<dbReference type="FunCoup" id="Q3SZM9">
    <property type="interactions" value="1844"/>
</dbReference>
<dbReference type="STRING" id="9913.ENSBTAP00000019528"/>
<dbReference type="PaxDb" id="9913-ENSBTAP00000019528"/>
<dbReference type="GeneID" id="508132"/>
<dbReference type="KEGG" id="bta:508132"/>
<dbReference type="CTD" id="55577"/>
<dbReference type="eggNOG" id="KOG1794">
    <property type="taxonomic scope" value="Eukaryota"/>
</dbReference>
<dbReference type="HOGENOM" id="CLU_016274_0_0_1"/>
<dbReference type="InParanoid" id="Q3SZM9"/>
<dbReference type="OrthoDB" id="311172at2759"/>
<dbReference type="TreeFam" id="TF314158"/>
<dbReference type="UniPathway" id="UPA00629"/>
<dbReference type="Proteomes" id="UP000009136">
    <property type="component" value="Unplaced"/>
</dbReference>
<dbReference type="GO" id="GO:0005524">
    <property type="term" value="F:ATP binding"/>
    <property type="evidence" value="ECO:0007669"/>
    <property type="project" value="UniProtKB-KW"/>
</dbReference>
<dbReference type="GO" id="GO:0160047">
    <property type="term" value="F:muramyl dipeptide kinase activity"/>
    <property type="evidence" value="ECO:0000250"/>
    <property type="project" value="UniProtKB"/>
</dbReference>
<dbReference type="GO" id="GO:0045127">
    <property type="term" value="F:N-acetylglucosamine kinase activity"/>
    <property type="evidence" value="ECO:0000250"/>
    <property type="project" value="UniProtKB"/>
</dbReference>
<dbReference type="GO" id="GO:0042742">
    <property type="term" value="P:defense response to bacterium"/>
    <property type="evidence" value="ECO:0000250"/>
    <property type="project" value="UniProtKB"/>
</dbReference>
<dbReference type="GO" id="GO:0045087">
    <property type="term" value="P:innate immune response"/>
    <property type="evidence" value="ECO:0007669"/>
    <property type="project" value="UniProtKB-KW"/>
</dbReference>
<dbReference type="GO" id="GO:0019262">
    <property type="term" value="P:N-acetylneuraminate catabolic process"/>
    <property type="evidence" value="ECO:0007669"/>
    <property type="project" value="UniProtKB-UniPathway"/>
</dbReference>
<dbReference type="GO" id="GO:0070434">
    <property type="term" value="P:positive regulation of nucleotide-binding oligomerization domain containing 2 signaling pathway"/>
    <property type="evidence" value="ECO:0000250"/>
    <property type="project" value="UniProtKB"/>
</dbReference>
<dbReference type="GO" id="GO:0032495">
    <property type="term" value="P:response to muramyl dipeptide"/>
    <property type="evidence" value="ECO:0000250"/>
    <property type="project" value="UniProtKB"/>
</dbReference>
<dbReference type="CDD" id="cd24078">
    <property type="entry name" value="ASKHA_NBD_NAGK_meta"/>
    <property type="match status" value="1"/>
</dbReference>
<dbReference type="FunFam" id="3.30.420.40:FF:000120">
    <property type="entry name" value="N-acetyl-D-glucosamine kinase isoform X1"/>
    <property type="match status" value="1"/>
</dbReference>
<dbReference type="Gene3D" id="3.30.420.40">
    <property type="match status" value="1"/>
</dbReference>
<dbReference type="InterPro" id="IPR002731">
    <property type="entry name" value="ATPase_BadF"/>
</dbReference>
<dbReference type="InterPro" id="IPR043129">
    <property type="entry name" value="ATPase_NBD"/>
</dbReference>
<dbReference type="InterPro" id="IPR039758">
    <property type="entry name" value="NAGK-like"/>
</dbReference>
<dbReference type="PANTHER" id="PTHR12862">
    <property type="entry name" value="BADF TYPE ATPASE DOMAIN-CONTAINING PROTEIN"/>
    <property type="match status" value="1"/>
</dbReference>
<dbReference type="PANTHER" id="PTHR12862:SF0">
    <property type="entry name" value="N-ACETYL-D-GLUCOSAMINE KINASE"/>
    <property type="match status" value="1"/>
</dbReference>
<dbReference type="Pfam" id="PF01869">
    <property type="entry name" value="BcrAD_BadFG"/>
    <property type="match status" value="1"/>
</dbReference>
<dbReference type="SUPFAM" id="SSF53067">
    <property type="entry name" value="Actin-like ATPase domain"/>
    <property type="match status" value="2"/>
</dbReference>
<organism>
    <name type="scientific">Bos taurus</name>
    <name type="common">Bovine</name>
    <dbReference type="NCBI Taxonomy" id="9913"/>
    <lineage>
        <taxon>Eukaryota</taxon>
        <taxon>Metazoa</taxon>
        <taxon>Chordata</taxon>
        <taxon>Craniata</taxon>
        <taxon>Vertebrata</taxon>
        <taxon>Euteleostomi</taxon>
        <taxon>Mammalia</taxon>
        <taxon>Eutheria</taxon>
        <taxon>Laurasiatheria</taxon>
        <taxon>Artiodactyla</taxon>
        <taxon>Ruminantia</taxon>
        <taxon>Pecora</taxon>
        <taxon>Bovidae</taxon>
        <taxon>Bovinae</taxon>
        <taxon>Bos</taxon>
    </lineage>
</organism>